<organism>
    <name type="scientific">Pseudomonas putida (strain GB-1)</name>
    <dbReference type="NCBI Taxonomy" id="76869"/>
    <lineage>
        <taxon>Bacteria</taxon>
        <taxon>Pseudomonadati</taxon>
        <taxon>Pseudomonadota</taxon>
        <taxon>Gammaproteobacteria</taxon>
        <taxon>Pseudomonadales</taxon>
        <taxon>Pseudomonadaceae</taxon>
        <taxon>Pseudomonas</taxon>
    </lineage>
</organism>
<accession>B0KGW2</accession>
<protein>
    <recommendedName>
        <fullName evidence="1">Enoyl-[acyl-carrier-protein] reductase [NADH]</fullName>
        <shortName evidence="1">ENR</shortName>
        <ecNumber evidence="1">1.3.1.9</ecNumber>
    </recommendedName>
</protein>
<keyword id="KW-0275">Fatty acid biosynthesis</keyword>
<keyword id="KW-0276">Fatty acid metabolism</keyword>
<keyword id="KW-0444">Lipid biosynthesis</keyword>
<keyword id="KW-0443">Lipid metabolism</keyword>
<keyword id="KW-0520">NAD</keyword>
<keyword id="KW-0560">Oxidoreductase</keyword>
<evidence type="ECO:0000255" key="1">
    <source>
        <dbReference type="HAMAP-Rule" id="MF_01838"/>
    </source>
</evidence>
<proteinExistence type="inferred from homology"/>
<gene>
    <name evidence="1" type="primary">fabV</name>
    <name type="ordered locus">PputGB1_4621</name>
</gene>
<feature type="chain" id="PRO_1000088455" description="Enoyl-[acyl-carrier-protein] reductase [NADH]">
    <location>
        <begin position="1"/>
        <end position="403"/>
    </location>
</feature>
<feature type="active site" description="Proton donor" evidence="1">
    <location>
        <position position="237"/>
    </location>
</feature>
<feature type="binding site" evidence="1">
    <location>
        <begin position="49"/>
        <end position="54"/>
    </location>
    <ligand>
        <name>NAD(+)</name>
        <dbReference type="ChEBI" id="CHEBI:57540"/>
    </ligand>
</feature>
<feature type="binding site" evidence="1">
    <location>
        <begin position="75"/>
        <end position="76"/>
    </location>
    <ligand>
        <name>NAD(+)</name>
        <dbReference type="ChEBI" id="CHEBI:57540"/>
    </ligand>
</feature>
<feature type="binding site" evidence="1">
    <location>
        <begin position="112"/>
        <end position="113"/>
    </location>
    <ligand>
        <name>NAD(+)</name>
        <dbReference type="ChEBI" id="CHEBI:57540"/>
    </ligand>
</feature>
<feature type="binding site" evidence="1">
    <location>
        <begin position="141"/>
        <end position="142"/>
    </location>
    <ligand>
        <name>NAD(+)</name>
        <dbReference type="ChEBI" id="CHEBI:57540"/>
    </ligand>
</feature>
<feature type="binding site" evidence="1">
    <location>
        <position position="227"/>
    </location>
    <ligand>
        <name>substrate</name>
    </ligand>
</feature>
<feature type="binding site" evidence="1">
    <location>
        <position position="246"/>
    </location>
    <ligand>
        <name>NAD(+)</name>
        <dbReference type="ChEBI" id="CHEBI:57540"/>
    </ligand>
</feature>
<feature type="binding site" evidence="1">
    <location>
        <begin position="276"/>
        <end position="278"/>
    </location>
    <ligand>
        <name>NAD(+)</name>
        <dbReference type="ChEBI" id="CHEBI:57540"/>
    </ligand>
</feature>
<feature type="site" description="Plays an important role in discriminating NADH against NADPH" evidence="1">
    <location>
        <position position="76"/>
    </location>
</feature>
<comment type="function">
    <text evidence="1">Involved in the final reduction of the elongation cycle of fatty acid synthesis (FAS II). Catalyzes the reduction of a carbon-carbon double bond in an enoyl moiety that is covalently linked to an acyl carrier protein (ACP).</text>
</comment>
<comment type="catalytic activity">
    <reaction evidence="1">
        <text>a 2,3-saturated acyl-[ACP] + NAD(+) = a (2E)-enoyl-[ACP] + NADH + H(+)</text>
        <dbReference type="Rhea" id="RHEA:10240"/>
        <dbReference type="Rhea" id="RHEA-COMP:9925"/>
        <dbReference type="Rhea" id="RHEA-COMP:9926"/>
        <dbReference type="ChEBI" id="CHEBI:15378"/>
        <dbReference type="ChEBI" id="CHEBI:57540"/>
        <dbReference type="ChEBI" id="CHEBI:57945"/>
        <dbReference type="ChEBI" id="CHEBI:78784"/>
        <dbReference type="ChEBI" id="CHEBI:78785"/>
        <dbReference type="EC" id="1.3.1.9"/>
    </reaction>
</comment>
<comment type="pathway">
    <text evidence="1">Lipid metabolism; fatty acid biosynthesis.</text>
</comment>
<comment type="subunit">
    <text evidence="1">Monomer.</text>
</comment>
<comment type="similarity">
    <text evidence="1">Belongs to the TER reductase family.</text>
</comment>
<name>FABV_PSEPG</name>
<reference key="1">
    <citation type="submission" date="2008-01" db="EMBL/GenBank/DDBJ databases">
        <title>Complete sequence of Pseudomonas putida GB-1.</title>
        <authorList>
            <consortium name="US DOE Joint Genome Institute"/>
            <person name="Copeland A."/>
            <person name="Lucas S."/>
            <person name="Lapidus A."/>
            <person name="Barry K."/>
            <person name="Glavina del Rio T."/>
            <person name="Dalin E."/>
            <person name="Tice H."/>
            <person name="Pitluck S."/>
            <person name="Bruce D."/>
            <person name="Goodwin L."/>
            <person name="Chertkov O."/>
            <person name="Brettin T."/>
            <person name="Detter J.C."/>
            <person name="Han C."/>
            <person name="Kuske C.R."/>
            <person name="Schmutz J."/>
            <person name="Larimer F."/>
            <person name="Land M."/>
            <person name="Hauser L."/>
            <person name="Kyrpides N."/>
            <person name="Kim E."/>
            <person name="McCarthy J.K."/>
            <person name="Richardson P."/>
        </authorList>
    </citation>
    <scope>NUCLEOTIDE SEQUENCE [LARGE SCALE GENOMIC DNA]</scope>
    <source>
        <strain>GB-1</strain>
    </source>
</reference>
<sequence>MAIIHPKVRGFICTTTHPKGCELNVRDQIEATRKLGVREDGPKKVLVIGASSGYGLAARITAAFGFKADTLGVFFEKPGTETKAGTAGWYNSAAFDKFAKAEGLYSKSINGDAFSDEARAKVIELIKNEMGGKVDLVIYSLASPVRKLPQTGEVIRSALKPIGEPYKSTAIDTNKDTIIEASIEPATEQEIADTVTVMGGQDWQLWIDALAGANVLAEGARTVAFSYIGSDITWPIYWHGALGQAKQDLDETALRLDQKLADEVKGGANVAVLKSVVTQASSAIPVMPLYLSMVFKIMQEKGIHEGTQNQLDRMYRDRMYRADGAPADVDEKGRLRLDDWELRDDVQTACKALWPQVTTENLFELTDYAGYKKQFLNLFGFERADVNYDEDVATDVKFDCIEL</sequence>
<dbReference type="EC" id="1.3.1.9" evidence="1"/>
<dbReference type="EMBL" id="CP000926">
    <property type="protein sequence ID" value="ABZ00508.1"/>
    <property type="molecule type" value="Genomic_DNA"/>
</dbReference>
<dbReference type="RefSeq" id="WP_012274159.1">
    <property type="nucleotide sequence ID" value="NC_010322.1"/>
</dbReference>
<dbReference type="SMR" id="B0KGW2"/>
<dbReference type="KEGG" id="ppg:PputGB1_4621"/>
<dbReference type="eggNOG" id="COG3007">
    <property type="taxonomic scope" value="Bacteria"/>
</dbReference>
<dbReference type="HOGENOM" id="CLU_057698_1_0_6"/>
<dbReference type="UniPathway" id="UPA00094"/>
<dbReference type="Proteomes" id="UP000002157">
    <property type="component" value="Chromosome"/>
</dbReference>
<dbReference type="GO" id="GO:0004318">
    <property type="term" value="F:enoyl-[acyl-carrier-protein] reductase (NADH) activity"/>
    <property type="evidence" value="ECO:0007669"/>
    <property type="project" value="UniProtKB-UniRule"/>
</dbReference>
<dbReference type="GO" id="GO:0051287">
    <property type="term" value="F:NAD binding"/>
    <property type="evidence" value="ECO:0007669"/>
    <property type="project" value="UniProtKB-UniRule"/>
</dbReference>
<dbReference type="GO" id="GO:0050343">
    <property type="term" value="F:trans-2-enoyl-CoA reductase (NADH) activity"/>
    <property type="evidence" value="ECO:0007669"/>
    <property type="project" value="TreeGrafter"/>
</dbReference>
<dbReference type="GO" id="GO:0006633">
    <property type="term" value="P:fatty acid biosynthetic process"/>
    <property type="evidence" value="ECO:0007669"/>
    <property type="project" value="UniProtKB-UniRule"/>
</dbReference>
<dbReference type="FunFam" id="3.40.50.720:FF:000221">
    <property type="entry name" value="Enoyl-[acyl-carrier-protein] reductase [NADH]"/>
    <property type="match status" value="1"/>
</dbReference>
<dbReference type="Gene3D" id="3.40.50.720">
    <property type="entry name" value="NAD(P)-binding Rossmann-like Domain"/>
    <property type="match status" value="1"/>
</dbReference>
<dbReference type="HAMAP" id="MF_01838">
    <property type="entry name" value="FabV_reductase"/>
    <property type="match status" value="1"/>
</dbReference>
<dbReference type="InterPro" id="IPR024906">
    <property type="entry name" value="Eno_Rdtase_FAD-bd_dom"/>
</dbReference>
<dbReference type="InterPro" id="IPR024910">
    <property type="entry name" value="Enoyl-CoA_Rdtase_cat_dom"/>
</dbReference>
<dbReference type="InterPro" id="IPR050048">
    <property type="entry name" value="FabV-like_NADH_b"/>
</dbReference>
<dbReference type="InterPro" id="IPR010758">
    <property type="entry name" value="Trans-2-enoyl-CoA_reductase"/>
</dbReference>
<dbReference type="NCBIfam" id="NF043048">
    <property type="entry name" value="EnoyACPredFabV"/>
    <property type="match status" value="1"/>
</dbReference>
<dbReference type="NCBIfam" id="NF010177">
    <property type="entry name" value="PRK13656.1"/>
    <property type="match status" value="1"/>
</dbReference>
<dbReference type="PANTHER" id="PTHR37480">
    <property type="entry name" value="ENOYL-[ACYL-CARRIER-PROTEIN] REDUCTASE [NADH]"/>
    <property type="match status" value="1"/>
</dbReference>
<dbReference type="PANTHER" id="PTHR37480:SF1">
    <property type="entry name" value="ENOYL-[ACYL-CARRIER-PROTEIN] REDUCTASE [NADH]"/>
    <property type="match status" value="1"/>
</dbReference>
<dbReference type="Pfam" id="PF07055">
    <property type="entry name" value="Eno-Rase_FAD_bd"/>
    <property type="match status" value="1"/>
</dbReference>
<dbReference type="Pfam" id="PF12242">
    <property type="entry name" value="Eno-Rase_NADH_b"/>
    <property type="match status" value="1"/>
</dbReference>
<dbReference type="Pfam" id="PF12241">
    <property type="entry name" value="Enoyl_reductase"/>
    <property type="match status" value="1"/>
</dbReference>